<dbReference type="EC" id="3.6.5.4" evidence="1"/>
<dbReference type="EMBL" id="AE002098">
    <property type="protein sequence ID" value="AAF40516.1"/>
    <property type="molecule type" value="Genomic_DNA"/>
</dbReference>
<dbReference type="PIR" id="H81243">
    <property type="entry name" value="H81243"/>
</dbReference>
<dbReference type="RefSeq" id="NP_273111.1">
    <property type="nucleotide sequence ID" value="NC_003112.2"/>
</dbReference>
<dbReference type="RefSeq" id="WP_002243928.1">
    <property type="nucleotide sequence ID" value="NC_003112.2"/>
</dbReference>
<dbReference type="SMR" id="P57011"/>
<dbReference type="FunCoup" id="P57011">
    <property type="interactions" value="496"/>
</dbReference>
<dbReference type="STRING" id="122586.NMB0045"/>
<dbReference type="PaxDb" id="122586-NMB0045"/>
<dbReference type="KEGG" id="nme:NMB0045"/>
<dbReference type="PATRIC" id="fig|122586.8.peg.60"/>
<dbReference type="HOGENOM" id="CLU_009301_0_2_4"/>
<dbReference type="InParanoid" id="P57011"/>
<dbReference type="OrthoDB" id="9804720at2"/>
<dbReference type="Proteomes" id="UP000000425">
    <property type="component" value="Chromosome"/>
</dbReference>
<dbReference type="GO" id="GO:0005737">
    <property type="term" value="C:cytoplasm"/>
    <property type="evidence" value="ECO:0007669"/>
    <property type="project" value="UniProtKB-SubCell"/>
</dbReference>
<dbReference type="GO" id="GO:0005886">
    <property type="term" value="C:plasma membrane"/>
    <property type="evidence" value="ECO:0000318"/>
    <property type="project" value="GO_Central"/>
</dbReference>
<dbReference type="GO" id="GO:0016887">
    <property type="term" value="F:ATP hydrolysis activity"/>
    <property type="evidence" value="ECO:0007669"/>
    <property type="project" value="InterPro"/>
</dbReference>
<dbReference type="GO" id="GO:0005525">
    <property type="term" value="F:GTP binding"/>
    <property type="evidence" value="ECO:0007669"/>
    <property type="project" value="UniProtKB-UniRule"/>
</dbReference>
<dbReference type="GO" id="GO:0003924">
    <property type="term" value="F:GTPase activity"/>
    <property type="evidence" value="ECO:0000318"/>
    <property type="project" value="GO_Central"/>
</dbReference>
<dbReference type="GO" id="GO:0005047">
    <property type="term" value="F:signal recognition particle binding"/>
    <property type="evidence" value="ECO:0000318"/>
    <property type="project" value="GO_Central"/>
</dbReference>
<dbReference type="GO" id="GO:0006605">
    <property type="term" value="P:protein targeting"/>
    <property type="evidence" value="ECO:0000318"/>
    <property type="project" value="GO_Central"/>
</dbReference>
<dbReference type="GO" id="GO:0006614">
    <property type="term" value="P:SRP-dependent cotranslational protein targeting to membrane"/>
    <property type="evidence" value="ECO:0007669"/>
    <property type="project" value="InterPro"/>
</dbReference>
<dbReference type="CDD" id="cd17874">
    <property type="entry name" value="FtsY"/>
    <property type="match status" value="1"/>
</dbReference>
<dbReference type="FunFam" id="1.20.120.140:FF:000002">
    <property type="entry name" value="Signal recognition particle receptor FtsY"/>
    <property type="match status" value="1"/>
</dbReference>
<dbReference type="FunFam" id="3.40.50.300:FF:000053">
    <property type="entry name" value="Signal recognition particle receptor FtsY"/>
    <property type="match status" value="1"/>
</dbReference>
<dbReference type="Gene3D" id="1.20.120.20">
    <property type="entry name" value="Apolipoprotein"/>
    <property type="match status" value="1"/>
</dbReference>
<dbReference type="Gene3D" id="3.40.50.300">
    <property type="entry name" value="P-loop containing nucleotide triphosphate hydrolases"/>
    <property type="match status" value="1"/>
</dbReference>
<dbReference type="Gene3D" id="1.20.120.140">
    <property type="entry name" value="Signal recognition particle SRP54, nucleotide-binding domain"/>
    <property type="match status" value="1"/>
</dbReference>
<dbReference type="HAMAP" id="MF_00920">
    <property type="entry name" value="FtsY"/>
    <property type="match status" value="1"/>
</dbReference>
<dbReference type="InterPro" id="IPR003593">
    <property type="entry name" value="AAA+_ATPase"/>
</dbReference>
<dbReference type="InterPro" id="IPR027417">
    <property type="entry name" value="P-loop_NTPase"/>
</dbReference>
<dbReference type="InterPro" id="IPR013822">
    <property type="entry name" value="Signal_recog_particl_SRP54_hlx"/>
</dbReference>
<dbReference type="InterPro" id="IPR004390">
    <property type="entry name" value="SR_rcpt_FtsY"/>
</dbReference>
<dbReference type="InterPro" id="IPR036225">
    <property type="entry name" value="SRP/SRP_N"/>
</dbReference>
<dbReference type="InterPro" id="IPR000897">
    <property type="entry name" value="SRP54_GTPase_dom"/>
</dbReference>
<dbReference type="InterPro" id="IPR042101">
    <property type="entry name" value="SRP54_N_sf"/>
</dbReference>
<dbReference type="NCBIfam" id="TIGR00064">
    <property type="entry name" value="ftsY"/>
    <property type="match status" value="1"/>
</dbReference>
<dbReference type="PANTHER" id="PTHR43134">
    <property type="entry name" value="SIGNAL RECOGNITION PARTICLE RECEPTOR SUBUNIT ALPHA"/>
    <property type="match status" value="1"/>
</dbReference>
<dbReference type="PANTHER" id="PTHR43134:SF1">
    <property type="entry name" value="SIGNAL RECOGNITION PARTICLE RECEPTOR SUBUNIT ALPHA"/>
    <property type="match status" value="1"/>
</dbReference>
<dbReference type="Pfam" id="PF00448">
    <property type="entry name" value="SRP54"/>
    <property type="match status" value="1"/>
</dbReference>
<dbReference type="Pfam" id="PF02881">
    <property type="entry name" value="SRP54_N"/>
    <property type="match status" value="1"/>
</dbReference>
<dbReference type="SMART" id="SM00382">
    <property type="entry name" value="AAA"/>
    <property type="match status" value="1"/>
</dbReference>
<dbReference type="SMART" id="SM00962">
    <property type="entry name" value="SRP54"/>
    <property type="match status" value="1"/>
</dbReference>
<dbReference type="SMART" id="SM00963">
    <property type="entry name" value="SRP54_N"/>
    <property type="match status" value="1"/>
</dbReference>
<dbReference type="SUPFAM" id="SSF58113">
    <property type="entry name" value="Apolipoprotein A-I"/>
    <property type="match status" value="1"/>
</dbReference>
<dbReference type="SUPFAM" id="SSF47364">
    <property type="entry name" value="Domain of the SRP/SRP receptor G-proteins"/>
    <property type="match status" value="1"/>
</dbReference>
<dbReference type="SUPFAM" id="SSF52540">
    <property type="entry name" value="P-loop containing nucleoside triphosphate hydrolases"/>
    <property type="match status" value="1"/>
</dbReference>
<dbReference type="PROSITE" id="PS00300">
    <property type="entry name" value="SRP54"/>
    <property type="match status" value="1"/>
</dbReference>
<reference key="1">
    <citation type="journal article" date="2000" name="Science">
        <title>Complete genome sequence of Neisseria meningitidis serogroup B strain MC58.</title>
        <authorList>
            <person name="Tettelin H."/>
            <person name="Saunders N.J."/>
            <person name="Heidelberg J.F."/>
            <person name="Jeffries A.C."/>
            <person name="Nelson K.E."/>
            <person name="Eisen J.A."/>
            <person name="Ketchum K.A."/>
            <person name="Hood D.W."/>
            <person name="Peden J.F."/>
            <person name="Dodson R.J."/>
            <person name="Nelson W.C."/>
            <person name="Gwinn M.L."/>
            <person name="DeBoy R.T."/>
            <person name="Peterson J.D."/>
            <person name="Hickey E.K."/>
            <person name="Haft D.H."/>
            <person name="Salzberg S.L."/>
            <person name="White O."/>
            <person name="Fleischmann R.D."/>
            <person name="Dougherty B.A."/>
            <person name="Mason T.M."/>
            <person name="Ciecko A."/>
            <person name="Parksey D.S."/>
            <person name="Blair E."/>
            <person name="Cittone H."/>
            <person name="Clark E.B."/>
            <person name="Cotton M.D."/>
            <person name="Utterback T.R."/>
            <person name="Khouri H.M."/>
            <person name="Qin H."/>
            <person name="Vamathevan J.J."/>
            <person name="Gill J."/>
            <person name="Scarlato V."/>
            <person name="Masignani V."/>
            <person name="Pizza M."/>
            <person name="Grandi G."/>
            <person name="Sun L."/>
            <person name="Smith H.O."/>
            <person name="Fraser C.M."/>
            <person name="Moxon E.R."/>
            <person name="Rappuoli R."/>
            <person name="Venter J.C."/>
        </authorList>
    </citation>
    <scope>NUCLEOTIDE SEQUENCE [LARGE SCALE GENOMIC DNA]</scope>
    <source>
        <strain>ATCC BAA-335 / MC58</strain>
    </source>
</reference>
<keyword id="KW-0997">Cell inner membrane</keyword>
<keyword id="KW-1003">Cell membrane</keyword>
<keyword id="KW-0963">Cytoplasm</keyword>
<keyword id="KW-0342">GTP-binding</keyword>
<keyword id="KW-0378">Hydrolase</keyword>
<keyword id="KW-0472">Membrane</keyword>
<keyword id="KW-0547">Nucleotide-binding</keyword>
<keyword id="KW-0675">Receptor</keyword>
<keyword id="KW-1185">Reference proteome</keyword>
<sequence length="421" mass="45143">MFSFFRRKKKQETPALEEAQIQETAAKAESELAQIVENIKEDAESLAESVKGQVESAVETVSGAVEQVKETVAEMLSEAEEAAEKAAEQVEAAKEAVAETVGEAVGQVQEAVATTEEHKLGWAARLKQGLTKSRDKMAKSLAGVFGGGQIDEDLYEELETVLITSDMGMEATEYLMKDVRDRVSLKGLKDGNELRGALKEALYDLIKPLEKPLVLPETKEPFVIMLAGINGAGKTTSIGKLAKYFQAQGKSVLLAAGDTFRAAAREQLQAWGERNNVTVISQTTGDSAAVCFDAVQAAKARGIDIVLADTAGRLPTQLHLMEEIKKVKRVLQKAMPDAPHEIIVVLDANIGQNAVNQVKAFDDALGLTGLIVTKLDGTAKGGILAALASDRPVPVRYIGVGEGIDDLRPFDARAFVDALLD</sequence>
<accession>P57011</accession>
<feature type="chain" id="PRO_0000101143" description="Signal recognition particle receptor FtsY">
    <location>
        <begin position="1"/>
        <end position="421"/>
    </location>
</feature>
<feature type="binding site" evidence="1">
    <location>
        <begin position="228"/>
        <end position="235"/>
    </location>
    <ligand>
        <name>GTP</name>
        <dbReference type="ChEBI" id="CHEBI:37565"/>
    </ligand>
</feature>
<feature type="binding site" evidence="1">
    <location>
        <begin position="309"/>
        <end position="313"/>
    </location>
    <ligand>
        <name>GTP</name>
        <dbReference type="ChEBI" id="CHEBI:37565"/>
    </ligand>
</feature>
<feature type="binding site" evidence="1">
    <location>
        <begin position="373"/>
        <end position="376"/>
    </location>
    <ligand>
        <name>GTP</name>
        <dbReference type="ChEBI" id="CHEBI:37565"/>
    </ligand>
</feature>
<proteinExistence type="inferred from homology"/>
<evidence type="ECO:0000255" key="1">
    <source>
        <dbReference type="HAMAP-Rule" id="MF_00920"/>
    </source>
</evidence>
<gene>
    <name evidence="1" type="primary">ftsY</name>
    <name type="synonym">pilA</name>
    <name type="ordered locus">NMB0045</name>
</gene>
<comment type="function">
    <text evidence="1">Involved in targeting and insertion of nascent membrane proteins into the cytoplasmic membrane. Acts as a receptor for the complex formed by the signal recognition particle (SRP) and the ribosome-nascent chain (RNC). Interaction with SRP-RNC leads to the transfer of the RNC complex to the Sec translocase for insertion into the membrane, the hydrolysis of GTP by both Ffh and FtsY, and the dissociation of the SRP-FtsY complex into the individual components.</text>
</comment>
<comment type="catalytic activity">
    <reaction evidence="1">
        <text>GTP + H2O = GDP + phosphate + H(+)</text>
        <dbReference type="Rhea" id="RHEA:19669"/>
        <dbReference type="ChEBI" id="CHEBI:15377"/>
        <dbReference type="ChEBI" id="CHEBI:15378"/>
        <dbReference type="ChEBI" id="CHEBI:37565"/>
        <dbReference type="ChEBI" id="CHEBI:43474"/>
        <dbReference type="ChEBI" id="CHEBI:58189"/>
        <dbReference type="EC" id="3.6.5.4"/>
    </reaction>
</comment>
<comment type="subunit">
    <text evidence="1">Part of the signal recognition particle protein translocation system, which is composed of SRP and FtsY. SRP is a ribonucleoprotein composed of Ffh and a 4.5S RNA molecule.</text>
</comment>
<comment type="subcellular location">
    <subcellularLocation>
        <location>Cell inner membrane</location>
        <topology>Peripheral membrane protein</topology>
        <orientation>Cytoplasmic side</orientation>
    </subcellularLocation>
    <subcellularLocation>
        <location evidence="1">Cytoplasm</location>
    </subcellularLocation>
</comment>
<comment type="similarity">
    <text evidence="1">Belongs to the GTP-binding SRP family. FtsY subfamily.</text>
</comment>
<name>FTSY_NEIMB</name>
<protein>
    <recommendedName>
        <fullName evidence="1">Signal recognition particle receptor FtsY</fullName>
        <shortName evidence="1">SRP receptor</shortName>
        <ecNumber evidence="1">3.6.5.4</ecNumber>
    </recommendedName>
</protein>
<organism>
    <name type="scientific">Neisseria meningitidis serogroup B (strain ATCC BAA-335 / MC58)</name>
    <dbReference type="NCBI Taxonomy" id="122586"/>
    <lineage>
        <taxon>Bacteria</taxon>
        <taxon>Pseudomonadati</taxon>
        <taxon>Pseudomonadota</taxon>
        <taxon>Betaproteobacteria</taxon>
        <taxon>Neisseriales</taxon>
        <taxon>Neisseriaceae</taxon>
        <taxon>Neisseria</taxon>
    </lineage>
</organism>